<proteinExistence type="evidence at protein level"/>
<evidence type="ECO:0000250" key="1">
    <source>
        <dbReference type="UniProtKB" id="O48814"/>
    </source>
</evidence>
<evidence type="ECO:0000255" key="2">
    <source>
        <dbReference type="PROSITE-ProRule" id="PRU00159"/>
    </source>
</evidence>
<evidence type="ECO:0000255" key="3">
    <source>
        <dbReference type="PROSITE-ProRule" id="PRU10027"/>
    </source>
</evidence>
<evidence type="ECO:0000256" key="4">
    <source>
        <dbReference type="SAM" id="MobiDB-lite"/>
    </source>
</evidence>
<evidence type="ECO:0000269" key="5">
    <source>
    </source>
</evidence>
<evidence type="ECO:0000305" key="6"/>
<comment type="catalytic activity">
    <reaction>
        <text>L-seryl-[protein] + ATP = O-phospho-L-seryl-[protein] + ADP + H(+)</text>
        <dbReference type="Rhea" id="RHEA:17989"/>
        <dbReference type="Rhea" id="RHEA-COMP:9863"/>
        <dbReference type="Rhea" id="RHEA-COMP:11604"/>
        <dbReference type="ChEBI" id="CHEBI:15378"/>
        <dbReference type="ChEBI" id="CHEBI:29999"/>
        <dbReference type="ChEBI" id="CHEBI:30616"/>
        <dbReference type="ChEBI" id="CHEBI:83421"/>
        <dbReference type="ChEBI" id="CHEBI:456216"/>
        <dbReference type="EC" id="2.7.11.1"/>
    </reaction>
</comment>
<comment type="catalytic activity">
    <reaction>
        <text>L-threonyl-[protein] + ATP = O-phospho-L-threonyl-[protein] + ADP + H(+)</text>
        <dbReference type="Rhea" id="RHEA:46608"/>
        <dbReference type="Rhea" id="RHEA-COMP:11060"/>
        <dbReference type="Rhea" id="RHEA-COMP:11605"/>
        <dbReference type="ChEBI" id="CHEBI:15378"/>
        <dbReference type="ChEBI" id="CHEBI:30013"/>
        <dbReference type="ChEBI" id="CHEBI:30616"/>
        <dbReference type="ChEBI" id="CHEBI:61977"/>
        <dbReference type="ChEBI" id="CHEBI:456216"/>
        <dbReference type="EC" id="2.7.11.1"/>
    </reaction>
</comment>
<comment type="subunit">
    <text evidence="5">Interacts with ARAC5 and ARAC10.</text>
</comment>
<comment type="subcellular location">
    <subcellularLocation>
        <location evidence="5">Cytoplasm</location>
    </subcellularLocation>
    <subcellularLocation>
        <location evidence="5">Endomembrane system</location>
        <topology evidence="5">Peripheral membrane protein</topology>
    </subcellularLocation>
    <subcellularLocation>
        <location evidence="5">Nucleus</location>
    </subcellularLocation>
</comment>
<comment type="tissue specificity">
    <text evidence="5">Mostly expressed in vasculature, hydathode endothem, leaf mesophyll cells and trichomes.</text>
</comment>
<comment type="induction">
    <text evidence="5">By fungal pathogens such as Phytophthora infestans and Botrytis cinerea. Promoted by ethylene in the vascular cylinder of primary roots and in the root cortex in the root/hypocotyl junction zone.</text>
</comment>
<comment type="similarity">
    <text evidence="2">Belongs to the protein kinase superfamily. Ser/Thr protein kinase family.</text>
</comment>
<comment type="sequence caution" evidence="6">
    <conflict type="erroneous gene model prediction">
        <sequence resource="EMBL-CDS" id="CAB89391"/>
    </conflict>
</comment>
<dbReference type="EC" id="2.7.11.1"/>
<dbReference type="EMBL" id="AL353995">
    <property type="protein sequence ID" value="CAB89391.1"/>
    <property type="status" value="ALT_SEQ"/>
    <property type="molecule type" value="Genomic_DNA"/>
</dbReference>
<dbReference type="EMBL" id="CP002688">
    <property type="protein sequence ID" value="AED91559.1"/>
    <property type="molecule type" value="Genomic_DNA"/>
</dbReference>
<dbReference type="EMBL" id="AY056156">
    <property type="protein sequence ID" value="AAL07235.1"/>
    <property type="molecule type" value="mRNA"/>
</dbReference>
<dbReference type="EMBL" id="AY150507">
    <property type="protein sequence ID" value="AAN13023.1"/>
    <property type="molecule type" value="mRNA"/>
</dbReference>
<dbReference type="PIR" id="T49987">
    <property type="entry name" value="T49987"/>
</dbReference>
<dbReference type="RefSeq" id="NP_568231.1">
    <property type="nucleotide sequence ID" value="NM_121090.4"/>
</dbReference>
<dbReference type="SMR" id="Q8H1D6"/>
<dbReference type="BioGRID" id="16195">
    <property type="interactions" value="10"/>
</dbReference>
<dbReference type="FunCoup" id="Q8H1D6">
    <property type="interactions" value="373"/>
</dbReference>
<dbReference type="IntAct" id="Q8H1D6">
    <property type="interactions" value="8"/>
</dbReference>
<dbReference type="STRING" id="3702.Q8H1D6"/>
<dbReference type="PaxDb" id="3702-AT5G10520.1"/>
<dbReference type="ProteomicsDB" id="225909"/>
<dbReference type="EnsemblPlants" id="AT5G10520.1">
    <property type="protein sequence ID" value="AT5G10520.1"/>
    <property type="gene ID" value="AT5G10520"/>
</dbReference>
<dbReference type="GeneID" id="830917"/>
<dbReference type="Gramene" id="AT5G10520.1">
    <property type="protein sequence ID" value="AT5G10520.1"/>
    <property type="gene ID" value="AT5G10520"/>
</dbReference>
<dbReference type="KEGG" id="ath:AT5G10520"/>
<dbReference type="Araport" id="AT5G10520"/>
<dbReference type="TAIR" id="AT5G10520">
    <property type="gene designation" value="RBK1"/>
</dbReference>
<dbReference type="eggNOG" id="KOG1187">
    <property type="taxonomic scope" value="Eukaryota"/>
</dbReference>
<dbReference type="HOGENOM" id="CLU_000288_155_1_1"/>
<dbReference type="InParanoid" id="Q8H1D6"/>
<dbReference type="OMA" id="LPENWAH"/>
<dbReference type="OrthoDB" id="4062651at2759"/>
<dbReference type="PhylomeDB" id="Q8H1D6"/>
<dbReference type="PRO" id="PR:Q8H1D6"/>
<dbReference type="Proteomes" id="UP000006548">
    <property type="component" value="Chromosome 5"/>
</dbReference>
<dbReference type="ExpressionAtlas" id="Q8H1D6">
    <property type="expression patterns" value="baseline and differential"/>
</dbReference>
<dbReference type="GO" id="GO:0005737">
    <property type="term" value="C:cytoplasm"/>
    <property type="evidence" value="ECO:0000314"/>
    <property type="project" value="UniProtKB"/>
</dbReference>
<dbReference type="GO" id="GO:0005829">
    <property type="term" value="C:cytosol"/>
    <property type="evidence" value="ECO:0000314"/>
    <property type="project" value="TAIR"/>
</dbReference>
<dbReference type="GO" id="GO:0012505">
    <property type="term" value="C:endomembrane system"/>
    <property type="evidence" value="ECO:0000314"/>
    <property type="project" value="UniProtKB"/>
</dbReference>
<dbReference type="GO" id="GO:0016020">
    <property type="term" value="C:membrane"/>
    <property type="evidence" value="ECO:0007669"/>
    <property type="project" value="UniProtKB-KW"/>
</dbReference>
<dbReference type="GO" id="GO:0005634">
    <property type="term" value="C:nucleus"/>
    <property type="evidence" value="ECO:0000314"/>
    <property type="project" value="UniProtKB"/>
</dbReference>
<dbReference type="GO" id="GO:0005524">
    <property type="term" value="F:ATP binding"/>
    <property type="evidence" value="ECO:0007669"/>
    <property type="project" value="UniProtKB-KW"/>
</dbReference>
<dbReference type="GO" id="GO:0051020">
    <property type="term" value="F:GTPase binding"/>
    <property type="evidence" value="ECO:0000353"/>
    <property type="project" value="UniProtKB"/>
</dbReference>
<dbReference type="GO" id="GO:0016301">
    <property type="term" value="F:kinase activity"/>
    <property type="evidence" value="ECO:0000314"/>
    <property type="project" value="TAIR"/>
</dbReference>
<dbReference type="GO" id="GO:0106310">
    <property type="term" value="F:protein serine kinase activity"/>
    <property type="evidence" value="ECO:0007669"/>
    <property type="project" value="RHEA"/>
</dbReference>
<dbReference type="GO" id="GO:0004674">
    <property type="term" value="F:protein serine/threonine kinase activity"/>
    <property type="evidence" value="ECO:0007669"/>
    <property type="project" value="UniProtKB-KW"/>
</dbReference>
<dbReference type="GO" id="GO:0071369">
    <property type="term" value="P:cellular response to ethylene stimulus"/>
    <property type="evidence" value="ECO:0000270"/>
    <property type="project" value="UniProtKB"/>
</dbReference>
<dbReference type="GO" id="GO:0050832">
    <property type="term" value="P:defense response to fungus"/>
    <property type="evidence" value="ECO:0000270"/>
    <property type="project" value="UniProtKB"/>
</dbReference>
<dbReference type="GO" id="GO:0098542">
    <property type="term" value="P:defense response to other organism"/>
    <property type="evidence" value="ECO:0000270"/>
    <property type="project" value="TAIR"/>
</dbReference>
<dbReference type="FunFam" id="3.30.200.20:FF:000558">
    <property type="entry name" value="Receptor-like cytosolic serine/threonine-protein kinase RBK1"/>
    <property type="match status" value="1"/>
</dbReference>
<dbReference type="FunFam" id="1.10.510.10:FF:000335">
    <property type="entry name" value="receptor-like cytosolic serine/threonine-protein kinase RBK2"/>
    <property type="match status" value="1"/>
</dbReference>
<dbReference type="Gene3D" id="3.30.200.20">
    <property type="entry name" value="Phosphorylase Kinase, domain 1"/>
    <property type="match status" value="1"/>
</dbReference>
<dbReference type="Gene3D" id="1.10.510.10">
    <property type="entry name" value="Transferase(Phosphotransferase) domain 1"/>
    <property type="match status" value="1"/>
</dbReference>
<dbReference type="InterPro" id="IPR011009">
    <property type="entry name" value="Kinase-like_dom_sf"/>
</dbReference>
<dbReference type="InterPro" id="IPR000719">
    <property type="entry name" value="Prot_kinase_dom"/>
</dbReference>
<dbReference type="InterPro" id="IPR017441">
    <property type="entry name" value="Protein_kinase_ATP_BS"/>
</dbReference>
<dbReference type="InterPro" id="IPR046958">
    <property type="entry name" value="RBK1/2/STUNTED"/>
</dbReference>
<dbReference type="InterPro" id="IPR001245">
    <property type="entry name" value="Ser-Thr/Tyr_kinase_cat_dom"/>
</dbReference>
<dbReference type="InterPro" id="IPR008271">
    <property type="entry name" value="Ser/Thr_kinase_AS"/>
</dbReference>
<dbReference type="PANTHER" id="PTHR47987">
    <property type="entry name" value="OS08G0249100 PROTEIN"/>
    <property type="match status" value="1"/>
</dbReference>
<dbReference type="PANTHER" id="PTHR47987:SF34">
    <property type="entry name" value="RECEPTOR-LIKE CYTOSOLIC SERINE_THREONINE-PROTEIN KINASE RBK1"/>
    <property type="match status" value="1"/>
</dbReference>
<dbReference type="Pfam" id="PF07714">
    <property type="entry name" value="PK_Tyr_Ser-Thr"/>
    <property type="match status" value="1"/>
</dbReference>
<dbReference type="SMART" id="SM00220">
    <property type="entry name" value="S_TKc"/>
    <property type="match status" value="1"/>
</dbReference>
<dbReference type="SUPFAM" id="SSF56112">
    <property type="entry name" value="Protein kinase-like (PK-like)"/>
    <property type="match status" value="1"/>
</dbReference>
<dbReference type="PROSITE" id="PS00107">
    <property type="entry name" value="PROTEIN_KINASE_ATP"/>
    <property type="match status" value="1"/>
</dbReference>
<dbReference type="PROSITE" id="PS50011">
    <property type="entry name" value="PROTEIN_KINASE_DOM"/>
    <property type="match status" value="1"/>
</dbReference>
<dbReference type="PROSITE" id="PS00108">
    <property type="entry name" value="PROTEIN_KINASE_ST"/>
    <property type="match status" value="1"/>
</dbReference>
<protein>
    <recommendedName>
        <fullName>Receptor-like cytosolic serine/threonine-protein kinase RBK1</fullName>
        <ecNumber>2.7.11.1</ecNumber>
    </recommendedName>
    <alternativeName>
        <fullName>Protein ROP BINDING PROTEIN KINASES 1</fullName>
    </alternativeName>
</protein>
<reference key="1">
    <citation type="journal article" date="2000" name="Nature">
        <title>Sequence and analysis of chromosome 5 of the plant Arabidopsis thaliana.</title>
        <authorList>
            <person name="Tabata S."/>
            <person name="Kaneko T."/>
            <person name="Nakamura Y."/>
            <person name="Kotani H."/>
            <person name="Kato T."/>
            <person name="Asamizu E."/>
            <person name="Miyajima N."/>
            <person name="Sasamoto S."/>
            <person name="Kimura T."/>
            <person name="Hosouchi T."/>
            <person name="Kawashima K."/>
            <person name="Kohara M."/>
            <person name="Matsumoto M."/>
            <person name="Matsuno A."/>
            <person name="Muraki A."/>
            <person name="Nakayama S."/>
            <person name="Nakazaki N."/>
            <person name="Naruo K."/>
            <person name="Okumura S."/>
            <person name="Shinpo S."/>
            <person name="Takeuchi C."/>
            <person name="Wada T."/>
            <person name="Watanabe A."/>
            <person name="Yamada M."/>
            <person name="Yasuda M."/>
            <person name="Sato S."/>
            <person name="de la Bastide M."/>
            <person name="Huang E."/>
            <person name="Spiegel L."/>
            <person name="Gnoj L."/>
            <person name="O'Shaughnessy A."/>
            <person name="Preston R."/>
            <person name="Habermann K."/>
            <person name="Murray J."/>
            <person name="Johnson D."/>
            <person name="Rohlfing T."/>
            <person name="Nelson J."/>
            <person name="Stoneking T."/>
            <person name="Pepin K."/>
            <person name="Spieth J."/>
            <person name="Sekhon M."/>
            <person name="Armstrong J."/>
            <person name="Becker M."/>
            <person name="Belter E."/>
            <person name="Cordum H."/>
            <person name="Cordes M."/>
            <person name="Courtney L."/>
            <person name="Courtney W."/>
            <person name="Dante M."/>
            <person name="Du H."/>
            <person name="Edwards J."/>
            <person name="Fryman J."/>
            <person name="Haakensen B."/>
            <person name="Lamar E."/>
            <person name="Latreille P."/>
            <person name="Leonard S."/>
            <person name="Meyer R."/>
            <person name="Mulvaney E."/>
            <person name="Ozersky P."/>
            <person name="Riley A."/>
            <person name="Strowmatt C."/>
            <person name="Wagner-McPherson C."/>
            <person name="Wollam A."/>
            <person name="Yoakum M."/>
            <person name="Bell M."/>
            <person name="Dedhia N."/>
            <person name="Parnell L."/>
            <person name="Shah R."/>
            <person name="Rodriguez M."/>
            <person name="Hoon See L."/>
            <person name="Vil D."/>
            <person name="Baker J."/>
            <person name="Kirchoff K."/>
            <person name="Toth K."/>
            <person name="King L."/>
            <person name="Bahret A."/>
            <person name="Miller B."/>
            <person name="Marra M.A."/>
            <person name="Martienssen R."/>
            <person name="McCombie W.R."/>
            <person name="Wilson R.K."/>
            <person name="Murphy G."/>
            <person name="Bancroft I."/>
            <person name="Volckaert G."/>
            <person name="Wambutt R."/>
            <person name="Duesterhoeft A."/>
            <person name="Stiekema W."/>
            <person name="Pohl T."/>
            <person name="Entian K.-D."/>
            <person name="Terryn N."/>
            <person name="Hartley N."/>
            <person name="Bent E."/>
            <person name="Johnson S."/>
            <person name="Langham S.-A."/>
            <person name="McCullagh B."/>
            <person name="Robben J."/>
            <person name="Grymonprez B."/>
            <person name="Zimmermann W."/>
            <person name="Ramsperger U."/>
            <person name="Wedler H."/>
            <person name="Balke K."/>
            <person name="Wedler E."/>
            <person name="Peters S."/>
            <person name="van Staveren M."/>
            <person name="Dirkse W."/>
            <person name="Mooijman P."/>
            <person name="Klein Lankhorst R."/>
            <person name="Weitzenegger T."/>
            <person name="Bothe G."/>
            <person name="Rose M."/>
            <person name="Hauf J."/>
            <person name="Berneiser S."/>
            <person name="Hempel S."/>
            <person name="Feldpausch M."/>
            <person name="Lamberth S."/>
            <person name="Villarroel R."/>
            <person name="Gielen J."/>
            <person name="Ardiles W."/>
            <person name="Bents O."/>
            <person name="Lemcke K."/>
            <person name="Kolesov G."/>
            <person name="Mayer K.F.X."/>
            <person name="Rudd S."/>
            <person name="Schoof H."/>
            <person name="Schueller C."/>
            <person name="Zaccaria P."/>
            <person name="Mewes H.-W."/>
            <person name="Bevan M."/>
            <person name="Fransz P.F."/>
        </authorList>
    </citation>
    <scope>NUCLEOTIDE SEQUENCE [LARGE SCALE GENOMIC DNA]</scope>
    <source>
        <strain>cv. Columbia</strain>
    </source>
</reference>
<reference key="2">
    <citation type="journal article" date="2017" name="Plant J.">
        <title>Araport11: a complete reannotation of the Arabidopsis thaliana reference genome.</title>
        <authorList>
            <person name="Cheng C.Y."/>
            <person name="Krishnakumar V."/>
            <person name="Chan A.P."/>
            <person name="Thibaud-Nissen F."/>
            <person name="Schobel S."/>
            <person name="Town C.D."/>
        </authorList>
    </citation>
    <scope>GENOME REANNOTATION</scope>
    <source>
        <strain>cv. Columbia</strain>
    </source>
</reference>
<reference key="3">
    <citation type="journal article" date="2003" name="Science">
        <title>Empirical analysis of transcriptional activity in the Arabidopsis genome.</title>
        <authorList>
            <person name="Yamada K."/>
            <person name="Lim J."/>
            <person name="Dale J.M."/>
            <person name="Chen H."/>
            <person name="Shinn P."/>
            <person name="Palm C.J."/>
            <person name="Southwick A.M."/>
            <person name="Wu H.C."/>
            <person name="Kim C.J."/>
            <person name="Nguyen M."/>
            <person name="Pham P.K."/>
            <person name="Cheuk R.F."/>
            <person name="Karlin-Newmann G."/>
            <person name="Liu S.X."/>
            <person name="Lam B."/>
            <person name="Sakano H."/>
            <person name="Wu T."/>
            <person name="Yu G."/>
            <person name="Miranda M."/>
            <person name="Quach H.L."/>
            <person name="Tripp M."/>
            <person name="Chang C.H."/>
            <person name="Lee J.M."/>
            <person name="Toriumi M.J."/>
            <person name="Chan M.M."/>
            <person name="Tang C.C."/>
            <person name="Onodera C.S."/>
            <person name="Deng J.M."/>
            <person name="Akiyama K."/>
            <person name="Ansari Y."/>
            <person name="Arakawa T."/>
            <person name="Banh J."/>
            <person name="Banno F."/>
            <person name="Bowser L."/>
            <person name="Brooks S.Y."/>
            <person name="Carninci P."/>
            <person name="Chao Q."/>
            <person name="Choy N."/>
            <person name="Enju A."/>
            <person name="Goldsmith A.D."/>
            <person name="Gurjal M."/>
            <person name="Hansen N.F."/>
            <person name="Hayashizaki Y."/>
            <person name="Johnson-Hopson C."/>
            <person name="Hsuan V.W."/>
            <person name="Iida K."/>
            <person name="Karnes M."/>
            <person name="Khan S."/>
            <person name="Koesema E."/>
            <person name="Ishida J."/>
            <person name="Jiang P.X."/>
            <person name="Jones T."/>
            <person name="Kawai J."/>
            <person name="Kamiya A."/>
            <person name="Meyers C."/>
            <person name="Nakajima M."/>
            <person name="Narusaka M."/>
            <person name="Seki M."/>
            <person name="Sakurai T."/>
            <person name="Satou M."/>
            <person name="Tamse R."/>
            <person name="Vaysberg M."/>
            <person name="Wallender E.K."/>
            <person name="Wong C."/>
            <person name="Yamamura Y."/>
            <person name="Yuan S."/>
            <person name="Shinozaki K."/>
            <person name="Davis R.W."/>
            <person name="Theologis A."/>
            <person name="Ecker J.R."/>
        </authorList>
    </citation>
    <scope>NUCLEOTIDE SEQUENCE [LARGE SCALE MRNA]</scope>
    <source>
        <strain>cv. Columbia</strain>
    </source>
</reference>
<reference key="4">
    <citation type="journal article" date="2008" name="Plant J.">
        <title>A cysteine-rich receptor-like kinase NCRK and a pathogen-induced protein kinase RBK1 are Rop GTPase interactors.</title>
        <authorList>
            <person name="Molendijk A.J."/>
            <person name="Ruperti B."/>
            <person name="Singh M.K."/>
            <person name="Dovzhenko A."/>
            <person name="Ditengou F.A."/>
            <person name="Milia M."/>
            <person name="Westphal L."/>
            <person name="Rosahl S."/>
            <person name="Soellick T.R."/>
            <person name="Uhrig J."/>
            <person name="Weingarten L."/>
            <person name="Huber M."/>
            <person name="Palme K."/>
        </authorList>
    </citation>
    <scope>INTERACTION WITH ARAC5 AND ARAC10</scope>
    <scope>SUBCELLULAR LOCATION</scope>
    <scope>TISSUE SPECIFICITY</scope>
    <scope>INDUCTION BY PATHOGENS AND ETHYLENE</scope>
</reference>
<organism>
    <name type="scientific">Arabidopsis thaliana</name>
    <name type="common">Mouse-ear cress</name>
    <dbReference type="NCBI Taxonomy" id="3702"/>
    <lineage>
        <taxon>Eukaryota</taxon>
        <taxon>Viridiplantae</taxon>
        <taxon>Streptophyta</taxon>
        <taxon>Embryophyta</taxon>
        <taxon>Tracheophyta</taxon>
        <taxon>Spermatophyta</taxon>
        <taxon>Magnoliopsida</taxon>
        <taxon>eudicotyledons</taxon>
        <taxon>Gunneridae</taxon>
        <taxon>Pentapetalae</taxon>
        <taxon>rosids</taxon>
        <taxon>malvids</taxon>
        <taxon>Brassicales</taxon>
        <taxon>Brassicaceae</taxon>
        <taxon>Camelineae</taxon>
        <taxon>Arabidopsis</taxon>
    </lineage>
</organism>
<name>RBK1_ARATH</name>
<gene>
    <name type="primary">RBK1</name>
    <name type="ordered locus">At5g10520</name>
    <name type="ORF">F12B17.130</name>
</gene>
<feature type="chain" id="PRO_0000403330" description="Receptor-like cytosolic serine/threonine-protein kinase RBK1">
    <location>
        <begin position="1"/>
        <end position="467"/>
    </location>
</feature>
<feature type="domain" description="Protein kinase" evidence="2">
    <location>
        <begin position="153"/>
        <end position="430"/>
    </location>
</feature>
<feature type="region of interest" description="Disordered" evidence="4">
    <location>
        <begin position="1"/>
        <end position="73"/>
    </location>
</feature>
<feature type="compositionally biased region" description="Basic and acidic residues" evidence="4">
    <location>
        <begin position="1"/>
        <end position="24"/>
    </location>
</feature>
<feature type="compositionally biased region" description="Low complexity" evidence="4">
    <location>
        <begin position="40"/>
        <end position="71"/>
    </location>
</feature>
<feature type="active site" description="Proton acceptor" evidence="2 3">
    <location>
        <position position="278"/>
    </location>
</feature>
<feature type="binding site" evidence="2">
    <location>
        <begin position="159"/>
        <end position="167"/>
    </location>
    <ligand>
        <name>ATP</name>
        <dbReference type="ChEBI" id="CHEBI:30616"/>
    </ligand>
</feature>
<feature type="binding site" evidence="2">
    <location>
        <position position="181"/>
    </location>
    <ligand>
        <name>ATP</name>
        <dbReference type="ChEBI" id="CHEBI:30616"/>
    </ligand>
</feature>
<feature type="modified residue" description="Phosphothreonine" evidence="1">
    <location>
        <position position="142"/>
    </location>
</feature>
<feature type="modified residue" description="Phosphoserine" evidence="1">
    <location>
        <position position="282"/>
    </location>
</feature>
<feature type="modified residue" description="Phosphothreonine" evidence="1">
    <location>
        <position position="318"/>
    </location>
</feature>
<feature type="modified residue" description="Phosphotyrosine" evidence="1">
    <location>
        <position position="326"/>
    </location>
</feature>
<feature type="sequence conflict" description="In Ref. 3; AAL07235." evidence="6" ref="3">
    <original>D</original>
    <variation>N</variation>
    <location>
        <position position="56"/>
    </location>
</feature>
<accession>Q8H1D6</accession>
<accession>Q93ZZ8</accession>
<accession>Q9LXA4</accession>
<sequence length="467" mass="52652">MAVEDNKNSESKNHQEVELHRNDLGLEDSSSPRGVLGMVSDSDNSSSSCSSCSSDDKSSSTSSPFSNTTKTVSSSHHGLQWNKMIESIKKKSMRRFSVIPLLASYELTRKNLRRKQPKLTPSESAFTCEAFFMAKPSWRNFTYEELAVATDYFNPENMIGKGGHAEVYKGVLINGETVAIKKLMSHAKEEEERVSDFLSELGIIAHVNHPNAARLRGFSSDRGLHFVLEYAPYGSLASMLFGSEECLEWKIRYKVALGIADGLSYLHNACPRRIIHRDIKASNILLNHDYEAQISDFGLAKWLPENWPHHVVFPIEGTFGYLAPEYFMHGIVDEKIDVFAFGVLLLEIITSRRAVDTASRQSIVAWAKPFLEKNSMEDIVDPRLGNMFNPTEMQRVMLTASMCVHHIAAMRPDMTRLVQLLRGEDGPAELQQKAGERTMSVNACDLQDHTSSSYLNELRRHRQLLME</sequence>
<keyword id="KW-0067">ATP-binding</keyword>
<keyword id="KW-0963">Cytoplasm</keyword>
<keyword id="KW-0418">Kinase</keyword>
<keyword id="KW-0472">Membrane</keyword>
<keyword id="KW-0547">Nucleotide-binding</keyword>
<keyword id="KW-0539">Nucleus</keyword>
<keyword id="KW-0597">Phosphoprotein</keyword>
<keyword id="KW-1185">Reference proteome</keyword>
<keyword id="KW-0723">Serine/threonine-protein kinase</keyword>
<keyword id="KW-0808">Transferase</keyword>